<dbReference type="EMBL" id="AP006878">
    <property type="protein sequence ID" value="BAD85519.1"/>
    <property type="molecule type" value="Genomic_DNA"/>
</dbReference>
<dbReference type="RefSeq" id="WP_011250281.1">
    <property type="nucleotide sequence ID" value="NC_006624.1"/>
</dbReference>
<dbReference type="SMR" id="Q5JGS5"/>
<dbReference type="FunCoup" id="Q5JGS5">
    <property type="interactions" value="56"/>
</dbReference>
<dbReference type="STRING" id="69014.TK1330"/>
<dbReference type="EnsemblBacteria" id="BAD85519">
    <property type="protein sequence ID" value="BAD85519"/>
    <property type="gene ID" value="TK1330"/>
</dbReference>
<dbReference type="GeneID" id="78447850"/>
<dbReference type="KEGG" id="tko:TK1330"/>
<dbReference type="PATRIC" id="fig|69014.16.peg.1302"/>
<dbReference type="eggNOG" id="arCOG01217">
    <property type="taxonomic scope" value="Archaea"/>
</dbReference>
<dbReference type="HOGENOM" id="CLU_169299_1_0_2"/>
<dbReference type="InParanoid" id="Q5JGS5"/>
<dbReference type="OrthoDB" id="56356at2157"/>
<dbReference type="PhylomeDB" id="Q5JGS5"/>
<dbReference type="Proteomes" id="UP000000536">
    <property type="component" value="Chromosome"/>
</dbReference>
<dbReference type="GO" id="GO:0048500">
    <property type="term" value="C:signal recognition particle"/>
    <property type="evidence" value="ECO:0007669"/>
    <property type="project" value="UniProtKB-UniRule"/>
</dbReference>
<dbReference type="GO" id="GO:0008312">
    <property type="term" value="F:7S RNA binding"/>
    <property type="evidence" value="ECO:0007669"/>
    <property type="project" value="UniProtKB-UniRule"/>
</dbReference>
<dbReference type="GO" id="GO:0006614">
    <property type="term" value="P:SRP-dependent cotranslational protein targeting to membrane"/>
    <property type="evidence" value="ECO:0007669"/>
    <property type="project" value="InterPro"/>
</dbReference>
<dbReference type="Gene3D" id="3.30.56.30">
    <property type="entry name" value="Signal recognition particle, SRP19-like subunit"/>
    <property type="match status" value="1"/>
</dbReference>
<dbReference type="HAMAP" id="MF_00305">
    <property type="entry name" value="SRP19"/>
    <property type="match status" value="1"/>
</dbReference>
<dbReference type="InterPro" id="IPR002778">
    <property type="entry name" value="Signal_recog_particle_SRP19"/>
</dbReference>
<dbReference type="InterPro" id="IPR036521">
    <property type="entry name" value="SRP19-like_sf"/>
</dbReference>
<dbReference type="InterPro" id="IPR022938">
    <property type="entry name" value="SRP19_arc-type"/>
</dbReference>
<dbReference type="NCBIfam" id="NF002993">
    <property type="entry name" value="PRK03745.1"/>
    <property type="match status" value="1"/>
</dbReference>
<dbReference type="Pfam" id="PF01922">
    <property type="entry name" value="SRP19"/>
    <property type="match status" value="1"/>
</dbReference>
<dbReference type="SUPFAM" id="SSF69695">
    <property type="entry name" value="SRP19"/>
    <property type="match status" value="1"/>
</dbReference>
<proteinExistence type="inferred from homology"/>
<protein>
    <recommendedName>
        <fullName evidence="1">Signal recognition particle 19 kDa protein</fullName>
        <shortName evidence="1">SRP19</shortName>
    </recommendedName>
</protein>
<name>SRP19_THEKO</name>
<evidence type="ECO:0000255" key="1">
    <source>
        <dbReference type="HAMAP-Rule" id="MF_00305"/>
    </source>
</evidence>
<accession>Q5JGS5</accession>
<comment type="function">
    <text evidence="1">Involved in targeting and insertion of nascent membrane proteins into the cytoplasmic membrane. Binds directly to 7S RNA and mediates binding of the 54 kDa subunit of the SRP.</text>
</comment>
<comment type="subunit">
    <text evidence="1">Part of the signal recognition particle protein translocation system, which is composed of SRP and FtsY. Archaeal SRP consists of a 7S RNA molecule of 300 nucleotides and two protein subunits: SRP54 and SRP19.</text>
</comment>
<comment type="subcellular location">
    <subcellularLocation>
        <location evidence="1">Cytoplasm</location>
    </subcellularLocation>
</comment>
<comment type="similarity">
    <text evidence="1">Belongs to the SRP19 family.</text>
</comment>
<organism>
    <name type="scientific">Thermococcus kodakarensis (strain ATCC BAA-918 / JCM 12380 / KOD1)</name>
    <name type="common">Pyrococcus kodakaraensis (strain KOD1)</name>
    <dbReference type="NCBI Taxonomy" id="69014"/>
    <lineage>
        <taxon>Archaea</taxon>
        <taxon>Methanobacteriati</taxon>
        <taxon>Methanobacteriota</taxon>
        <taxon>Thermococci</taxon>
        <taxon>Thermococcales</taxon>
        <taxon>Thermococcaceae</taxon>
        <taxon>Thermococcus</taxon>
    </lineage>
</organism>
<feature type="chain" id="PRO_0000322231" description="Signal recognition particle 19 kDa protein">
    <location>
        <begin position="1"/>
        <end position="108"/>
    </location>
</feature>
<keyword id="KW-0963">Cytoplasm</keyword>
<keyword id="KW-1185">Reference proteome</keyword>
<keyword id="KW-0687">Ribonucleoprotein</keyword>
<keyword id="KW-0694">RNA-binding</keyword>
<keyword id="KW-0733">Signal recognition particle</keyword>
<sequence>MKFVVWPSEIDSRLPRKYGRLVKKEVALEAPTPEEIRDAAEILGMKVIEFEPEKLNPRLSGIDEELRTKGMLRIESPYPKGKSLRMICEKIRELRAKKRKAHGKRKKR</sequence>
<gene>
    <name evidence="1" type="primary">srp19</name>
    <name type="ordered locus">TK1330</name>
</gene>
<reference key="1">
    <citation type="journal article" date="2005" name="Genome Res.">
        <title>Complete genome sequence of the hyperthermophilic archaeon Thermococcus kodakaraensis KOD1 and comparison with Pyrococcus genomes.</title>
        <authorList>
            <person name="Fukui T."/>
            <person name="Atomi H."/>
            <person name="Kanai T."/>
            <person name="Matsumi R."/>
            <person name="Fujiwara S."/>
            <person name="Imanaka T."/>
        </authorList>
    </citation>
    <scope>NUCLEOTIDE SEQUENCE [LARGE SCALE GENOMIC DNA]</scope>
    <source>
        <strain>ATCC BAA-918 / JCM 12380 / KOD1</strain>
    </source>
</reference>